<dbReference type="EC" id="1.4.4.2" evidence="1"/>
<dbReference type="EMBL" id="CP001124">
    <property type="protein sequence ID" value="ACH37426.1"/>
    <property type="molecule type" value="Genomic_DNA"/>
</dbReference>
<dbReference type="RefSeq" id="WP_012528834.1">
    <property type="nucleotide sequence ID" value="NC_011146.1"/>
</dbReference>
<dbReference type="SMR" id="B5EAW7"/>
<dbReference type="STRING" id="404380.Gbem_0397"/>
<dbReference type="KEGG" id="gbm:Gbem_0397"/>
<dbReference type="eggNOG" id="COG0403">
    <property type="taxonomic scope" value="Bacteria"/>
</dbReference>
<dbReference type="HOGENOM" id="CLU_004620_0_2_7"/>
<dbReference type="OrthoDB" id="9801272at2"/>
<dbReference type="Proteomes" id="UP000008825">
    <property type="component" value="Chromosome"/>
</dbReference>
<dbReference type="GO" id="GO:0004375">
    <property type="term" value="F:glycine dehydrogenase (decarboxylating) activity"/>
    <property type="evidence" value="ECO:0007669"/>
    <property type="project" value="UniProtKB-EC"/>
</dbReference>
<dbReference type="GO" id="GO:0019464">
    <property type="term" value="P:glycine decarboxylation via glycine cleavage system"/>
    <property type="evidence" value="ECO:0007669"/>
    <property type="project" value="UniProtKB-UniRule"/>
</dbReference>
<dbReference type="GO" id="GO:0009116">
    <property type="term" value="P:nucleoside metabolic process"/>
    <property type="evidence" value="ECO:0007669"/>
    <property type="project" value="InterPro"/>
</dbReference>
<dbReference type="CDD" id="cd00613">
    <property type="entry name" value="GDC-P"/>
    <property type="match status" value="1"/>
</dbReference>
<dbReference type="Gene3D" id="3.90.1150.10">
    <property type="entry name" value="Aspartate Aminotransferase, domain 1"/>
    <property type="match status" value="1"/>
</dbReference>
<dbReference type="Gene3D" id="3.40.640.10">
    <property type="entry name" value="Type I PLP-dependent aspartate aminotransferase-like (Major domain)"/>
    <property type="match status" value="1"/>
</dbReference>
<dbReference type="HAMAP" id="MF_00712">
    <property type="entry name" value="GcvPA"/>
    <property type="match status" value="1"/>
</dbReference>
<dbReference type="InterPro" id="IPR023010">
    <property type="entry name" value="GcvPA"/>
</dbReference>
<dbReference type="InterPro" id="IPR049315">
    <property type="entry name" value="GDC-P_N"/>
</dbReference>
<dbReference type="InterPro" id="IPR020581">
    <property type="entry name" value="GDC_P"/>
</dbReference>
<dbReference type="InterPro" id="IPR015424">
    <property type="entry name" value="PyrdxlP-dep_Trfase"/>
</dbReference>
<dbReference type="InterPro" id="IPR015421">
    <property type="entry name" value="PyrdxlP-dep_Trfase_major"/>
</dbReference>
<dbReference type="InterPro" id="IPR015422">
    <property type="entry name" value="PyrdxlP-dep_Trfase_small"/>
</dbReference>
<dbReference type="NCBIfam" id="NF001696">
    <property type="entry name" value="PRK00451.1"/>
    <property type="match status" value="1"/>
</dbReference>
<dbReference type="PANTHER" id="PTHR42806">
    <property type="entry name" value="GLYCINE CLEAVAGE SYSTEM P-PROTEIN"/>
    <property type="match status" value="1"/>
</dbReference>
<dbReference type="PANTHER" id="PTHR42806:SF1">
    <property type="entry name" value="GLYCINE DEHYDROGENASE (DECARBOXYLATING)"/>
    <property type="match status" value="1"/>
</dbReference>
<dbReference type="Pfam" id="PF02347">
    <property type="entry name" value="GDC-P"/>
    <property type="match status" value="1"/>
</dbReference>
<dbReference type="PIRSF" id="PIRSF006815">
    <property type="entry name" value="GcvPA"/>
    <property type="match status" value="1"/>
</dbReference>
<dbReference type="SUPFAM" id="SSF53383">
    <property type="entry name" value="PLP-dependent transferases"/>
    <property type="match status" value="1"/>
</dbReference>
<name>GCSPA_CITBB</name>
<gene>
    <name evidence="1" type="primary">gcvPA</name>
    <name type="ordered locus">Gbem_0397</name>
</gene>
<keyword id="KW-0560">Oxidoreductase</keyword>
<keyword id="KW-1185">Reference proteome</keyword>
<sequence>MGYCPNTPDEIREMLAVIGAGSIEELFAPIPAELRAKSFDLPPGMSEFELMRIMREKAAAGGAEIVPFIGGGIYDHIIPAAVDHLSSRAEFYTAYTPYQPECSQGTLQALFEYQSVICRLTGMEASNASLYDGGTAVAEAALMSLRITERNRVVLDASINPLHREIVTGYLHGLSAEAVEVAPDGCGSDLKRLIDSIDEETAAVIVQNPNFFGSVQDFSELAVKAHEKGALLIISGYPIALGLVASPGEMGADIAVGDGQSLGNPLSFGGPYFGFIATRKRFIRNLPGRIVGETIDNQGRRGYVLTLQAREQHIKRHKATSNICSNQSLCALRGLIFCASLGRKGFEELAVLNYDKAQYAKSRLTGVKGVSVMNAGTTFNEFTLSLPKDAAPVVEKLLACGVAAGVPLVQYYPGMDNALTVTVTEKRSKAEIDRLAALLEEALCS</sequence>
<comment type="function">
    <text evidence="1">The glycine cleavage system catalyzes the degradation of glycine. The P protein binds the alpha-amino group of glycine through its pyridoxal phosphate cofactor; CO(2) is released and the remaining methylamine moiety is then transferred to the lipoamide cofactor of the H protein.</text>
</comment>
<comment type="catalytic activity">
    <reaction evidence="1">
        <text>N(6)-[(R)-lipoyl]-L-lysyl-[glycine-cleavage complex H protein] + glycine + H(+) = N(6)-[(R)-S(8)-aminomethyldihydrolipoyl]-L-lysyl-[glycine-cleavage complex H protein] + CO2</text>
        <dbReference type="Rhea" id="RHEA:24304"/>
        <dbReference type="Rhea" id="RHEA-COMP:10494"/>
        <dbReference type="Rhea" id="RHEA-COMP:10495"/>
        <dbReference type="ChEBI" id="CHEBI:15378"/>
        <dbReference type="ChEBI" id="CHEBI:16526"/>
        <dbReference type="ChEBI" id="CHEBI:57305"/>
        <dbReference type="ChEBI" id="CHEBI:83099"/>
        <dbReference type="ChEBI" id="CHEBI:83143"/>
        <dbReference type="EC" id="1.4.4.2"/>
    </reaction>
</comment>
<comment type="subunit">
    <text evidence="1">The glycine cleavage system is composed of four proteins: P, T, L and H. In this organism, the P 'protein' is a heterodimer of two subunits.</text>
</comment>
<comment type="similarity">
    <text evidence="1">Belongs to the GcvP family. N-terminal subunit subfamily.</text>
</comment>
<protein>
    <recommendedName>
        <fullName evidence="1">Probable glycine dehydrogenase (decarboxylating) subunit 1</fullName>
        <ecNumber evidence="1">1.4.4.2</ecNumber>
    </recommendedName>
    <alternativeName>
        <fullName evidence="1">Glycine cleavage system P-protein subunit 1</fullName>
    </alternativeName>
    <alternativeName>
        <fullName evidence="1">Glycine decarboxylase subunit 1</fullName>
    </alternativeName>
    <alternativeName>
        <fullName evidence="1">Glycine dehydrogenase (aminomethyl-transferring) subunit 1</fullName>
    </alternativeName>
</protein>
<accession>B5EAW7</accession>
<evidence type="ECO:0000255" key="1">
    <source>
        <dbReference type="HAMAP-Rule" id="MF_00712"/>
    </source>
</evidence>
<feature type="chain" id="PRO_1000132481" description="Probable glycine dehydrogenase (decarboxylating) subunit 1">
    <location>
        <begin position="1"/>
        <end position="445"/>
    </location>
</feature>
<reference key="1">
    <citation type="submission" date="2008-07" db="EMBL/GenBank/DDBJ databases">
        <title>Complete sequence of Geobacter bemidjiensis BEM.</title>
        <authorList>
            <consortium name="US DOE Joint Genome Institute"/>
            <person name="Lucas S."/>
            <person name="Copeland A."/>
            <person name="Lapidus A."/>
            <person name="Glavina del Rio T."/>
            <person name="Dalin E."/>
            <person name="Tice H."/>
            <person name="Bruce D."/>
            <person name="Goodwin L."/>
            <person name="Pitluck S."/>
            <person name="Kiss H."/>
            <person name="Brettin T."/>
            <person name="Detter J.C."/>
            <person name="Han C."/>
            <person name="Kuske C.R."/>
            <person name="Schmutz J."/>
            <person name="Larimer F."/>
            <person name="Land M."/>
            <person name="Hauser L."/>
            <person name="Kyrpides N."/>
            <person name="Lykidis A."/>
            <person name="Lovley D."/>
            <person name="Richardson P."/>
        </authorList>
    </citation>
    <scope>NUCLEOTIDE SEQUENCE [LARGE SCALE GENOMIC DNA]</scope>
    <source>
        <strain>ATCC BAA-1014 / DSM 16622 / JCM 12645 / Bem</strain>
    </source>
</reference>
<organism>
    <name type="scientific">Citrifermentans bemidjiense (strain ATCC BAA-1014 / DSM 16622 / JCM 12645 / Bem)</name>
    <name type="common">Geobacter bemidjiensis</name>
    <dbReference type="NCBI Taxonomy" id="404380"/>
    <lineage>
        <taxon>Bacteria</taxon>
        <taxon>Pseudomonadati</taxon>
        <taxon>Thermodesulfobacteriota</taxon>
        <taxon>Desulfuromonadia</taxon>
        <taxon>Geobacterales</taxon>
        <taxon>Geobacteraceae</taxon>
        <taxon>Citrifermentans</taxon>
    </lineage>
</organism>
<proteinExistence type="inferred from homology"/>